<evidence type="ECO:0000255" key="1">
    <source>
        <dbReference type="HAMAP-Rule" id="MF_01371"/>
    </source>
</evidence>
<evidence type="ECO:0000305" key="2"/>
<reference key="1">
    <citation type="journal article" date="2010" name="PLoS Genet.">
        <title>Genome sequence of the plant growth promoting endophytic bacterium Enterobacter sp. 638.</title>
        <authorList>
            <person name="Taghavi S."/>
            <person name="van der Lelie D."/>
            <person name="Hoffman A."/>
            <person name="Zhang Y.B."/>
            <person name="Walla M.D."/>
            <person name="Vangronsveld J."/>
            <person name="Newman L."/>
            <person name="Monchy S."/>
        </authorList>
    </citation>
    <scope>NUCLEOTIDE SEQUENCE [LARGE SCALE GENOMIC DNA]</scope>
    <source>
        <strain>638</strain>
    </source>
</reference>
<organism>
    <name type="scientific">Enterobacter sp. (strain 638)</name>
    <dbReference type="NCBI Taxonomy" id="399742"/>
    <lineage>
        <taxon>Bacteria</taxon>
        <taxon>Pseudomonadati</taxon>
        <taxon>Pseudomonadota</taxon>
        <taxon>Gammaproteobacteria</taxon>
        <taxon>Enterobacterales</taxon>
        <taxon>Enterobacteriaceae</taxon>
        <taxon>Enterobacter</taxon>
    </lineage>
</organism>
<feature type="chain" id="PRO_1000068197" description="Large ribosomal subunit protein uL30">
    <location>
        <begin position="1"/>
        <end position="59"/>
    </location>
</feature>
<keyword id="KW-0687">Ribonucleoprotein</keyword>
<keyword id="KW-0689">Ribosomal protein</keyword>
<gene>
    <name evidence="1" type="primary">rpmD</name>
    <name type="ordered locus">Ent638_3733</name>
</gene>
<name>RL30_ENT38</name>
<sequence>MAKTIKITQTRSAIGRLPKHKATLLGLGLRRIGHTVEREDTPAVRGMVNAVYFMVKVEE</sequence>
<dbReference type="EMBL" id="CP000653">
    <property type="protein sequence ID" value="ABP62390.1"/>
    <property type="molecule type" value="Genomic_DNA"/>
</dbReference>
<dbReference type="RefSeq" id="WP_003863301.1">
    <property type="nucleotide sequence ID" value="NC_009436.1"/>
</dbReference>
<dbReference type="SMR" id="A4WFB0"/>
<dbReference type="STRING" id="399742.Ent638_3733"/>
<dbReference type="GeneID" id="98390424"/>
<dbReference type="KEGG" id="ent:Ent638_3733"/>
<dbReference type="eggNOG" id="COG1841">
    <property type="taxonomic scope" value="Bacteria"/>
</dbReference>
<dbReference type="HOGENOM" id="CLU_131047_1_4_6"/>
<dbReference type="OrthoDB" id="9812790at2"/>
<dbReference type="Proteomes" id="UP000000230">
    <property type="component" value="Chromosome"/>
</dbReference>
<dbReference type="GO" id="GO:0022625">
    <property type="term" value="C:cytosolic large ribosomal subunit"/>
    <property type="evidence" value="ECO:0007669"/>
    <property type="project" value="TreeGrafter"/>
</dbReference>
<dbReference type="GO" id="GO:0003735">
    <property type="term" value="F:structural constituent of ribosome"/>
    <property type="evidence" value="ECO:0007669"/>
    <property type="project" value="InterPro"/>
</dbReference>
<dbReference type="GO" id="GO:0006412">
    <property type="term" value="P:translation"/>
    <property type="evidence" value="ECO:0007669"/>
    <property type="project" value="UniProtKB-UniRule"/>
</dbReference>
<dbReference type="CDD" id="cd01658">
    <property type="entry name" value="Ribosomal_L30"/>
    <property type="match status" value="1"/>
</dbReference>
<dbReference type="FunFam" id="3.30.1390.20:FF:000001">
    <property type="entry name" value="50S ribosomal protein L30"/>
    <property type="match status" value="1"/>
</dbReference>
<dbReference type="Gene3D" id="3.30.1390.20">
    <property type="entry name" value="Ribosomal protein L30, ferredoxin-like fold domain"/>
    <property type="match status" value="1"/>
</dbReference>
<dbReference type="HAMAP" id="MF_01371_B">
    <property type="entry name" value="Ribosomal_uL30_B"/>
    <property type="match status" value="1"/>
</dbReference>
<dbReference type="InterPro" id="IPR036919">
    <property type="entry name" value="Ribo_uL30_ferredoxin-like_sf"/>
</dbReference>
<dbReference type="InterPro" id="IPR005996">
    <property type="entry name" value="Ribosomal_uL30_bac-type"/>
</dbReference>
<dbReference type="InterPro" id="IPR018038">
    <property type="entry name" value="Ribosomal_uL30_CS"/>
</dbReference>
<dbReference type="InterPro" id="IPR016082">
    <property type="entry name" value="Ribosomal_uL30_ferredoxin-like"/>
</dbReference>
<dbReference type="NCBIfam" id="TIGR01308">
    <property type="entry name" value="rpmD_bact"/>
    <property type="match status" value="1"/>
</dbReference>
<dbReference type="PANTHER" id="PTHR15892:SF2">
    <property type="entry name" value="LARGE RIBOSOMAL SUBUNIT PROTEIN UL30M"/>
    <property type="match status" value="1"/>
</dbReference>
<dbReference type="PANTHER" id="PTHR15892">
    <property type="entry name" value="MITOCHONDRIAL RIBOSOMAL PROTEIN L30"/>
    <property type="match status" value="1"/>
</dbReference>
<dbReference type="Pfam" id="PF00327">
    <property type="entry name" value="Ribosomal_L30"/>
    <property type="match status" value="1"/>
</dbReference>
<dbReference type="PIRSF" id="PIRSF002211">
    <property type="entry name" value="Ribosomal_L30_bac-type"/>
    <property type="match status" value="1"/>
</dbReference>
<dbReference type="SUPFAM" id="SSF55129">
    <property type="entry name" value="Ribosomal protein L30p/L7e"/>
    <property type="match status" value="1"/>
</dbReference>
<dbReference type="PROSITE" id="PS00634">
    <property type="entry name" value="RIBOSOMAL_L30"/>
    <property type="match status" value="1"/>
</dbReference>
<proteinExistence type="inferred from homology"/>
<accession>A4WFB0</accession>
<protein>
    <recommendedName>
        <fullName evidence="1">Large ribosomal subunit protein uL30</fullName>
    </recommendedName>
    <alternativeName>
        <fullName evidence="2">50S ribosomal protein L30</fullName>
    </alternativeName>
</protein>
<comment type="subunit">
    <text evidence="1">Part of the 50S ribosomal subunit.</text>
</comment>
<comment type="similarity">
    <text evidence="1">Belongs to the universal ribosomal protein uL30 family.</text>
</comment>